<accession>P66726</accession>
<accession>Q99UQ8</accession>
<sequence>MLNPPLNQLTSQIKSKYLIATTAAKRAREIDEQPETELLSEYHSFKPVGRALEEIADGKIRPVISSDYYGKE</sequence>
<name>RPOZ_STAAN</name>
<evidence type="ECO:0000255" key="1">
    <source>
        <dbReference type="HAMAP-Rule" id="MF_00366"/>
    </source>
</evidence>
<comment type="function">
    <text evidence="1">Promotes RNA polymerase assembly. Latches the N- and C-terminal regions of the beta' subunit thereby facilitating its interaction with the beta and alpha subunits.</text>
</comment>
<comment type="catalytic activity">
    <reaction evidence="1">
        <text>RNA(n) + a ribonucleoside 5'-triphosphate = RNA(n+1) + diphosphate</text>
        <dbReference type="Rhea" id="RHEA:21248"/>
        <dbReference type="Rhea" id="RHEA-COMP:14527"/>
        <dbReference type="Rhea" id="RHEA-COMP:17342"/>
        <dbReference type="ChEBI" id="CHEBI:33019"/>
        <dbReference type="ChEBI" id="CHEBI:61557"/>
        <dbReference type="ChEBI" id="CHEBI:140395"/>
        <dbReference type="EC" id="2.7.7.6"/>
    </reaction>
</comment>
<comment type="subunit">
    <text evidence="1">The RNAP catalytic core consists of 2 alpha, 1 beta, 1 beta' and 1 omega subunit. When a sigma factor is associated with the core the holoenzyme is formed, which can initiate transcription.</text>
</comment>
<comment type="similarity">
    <text evidence="1">Belongs to the RNA polymerase subunit omega family.</text>
</comment>
<keyword id="KW-0240">DNA-directed RNA polymerase</keyword>
<keyword id="KW-0548">Nucleotidyltransferase</keyword>
<keyword id="KW-0804">Transcription</keyword>
<keyword id="KW-0808">Transferase</keyword>
<dbReference type="EC" id="2.7.7.6" evidence="1"/>
<dbReference type="EMBL" id="BA000018">
    <property type="protein sequence ID" value="BAB42305.1"/>
    <property type="molecule type" value="Genomic_DNA"/>
</dbReference>
<dbReference type="PIR" id="E89893">
    <property type="entry name" value="E89893"/>
</dbReference>
<dbReference type="RefSeq" id="WP_000933956.1">
    <property type="nucleotide sequence ID" value="NC_002745.2"/>
</dbReference>
<dbReference type="SMR" id="P66726"/>
<dbReference type="EnsemblBacteria" id="BAB42305">
    <property type="protein sequence ID" value="BAB42305"/>
    <property type="gene ID" value="BAB42305"/>
</dbReference>
<dbReference type="KEGG" id="sau:SA1053"/>
<dbReference type="HOGENOM" id="CLU_125406_6_0_9"/>
<dbReference type="GO" id="GO:0000428">
    <property type="term" value="C:DNA-directed RNA polymerase complex"/>
    <property type="evidence" value="ECO:0007669"/>
    <property type="project" value="UniProtKB-KW"/>
</dbReference>
<dbReference type="GO" id="GO:0003677">
    <property type="term" value="F:DNA binding"/>
    <property type="evidence" value="ECO:0007669"/>
    <property type="project" value="UniProtKB-UniRule"/>
</dbReference>
<dbReference type="GO" id="GO:0003899">
    <property type="term" value="F:DNA-directed RNA polymerase activity"/>
    <property type="evidence" value="ECO:0007669"/>
    <property type="project" value="UniProtKB-UniRule"/>
</dbReference>
<dbReference type="GO" id="GO:0006351">
    <property type="term" value="P:DNA-templated transcription"/>
    <property type="evidence" value="ECO:0007669"/>
    <property type="project" value="UniProtKB-UniRule"/>
</dbReference>
<dbReference type="Gene3D" id="3.90.940.10">
    <property type="match status" value="1"/>
</dbReference>
<dbReference type="HAMAP" id="MF_00366">
    <property type="entry name" value="RNApol_bact_RpoZ"/>
    <property type="match status" value="1"/>
</dbReference>
<dbReference type="InterPro" id="IPR003716">
    <property type="entry name" value="DNA-dir_RNA_pol_omega"/>
</dbReference>
<dbReference type="InterPro" id="IPR006110">
    <property type="entry name" value="Pol_omega/Rpo6/RPB6"/>
</dbReference>
<dbReference type="InterPro" id="IPR036161">
    <property type="entry name" value="RPB6/omega-like_sf"/>
</dbReference>
<dbReference type="NCBIfam" id="TIGR00690">
    <property type="entry name" value="rpoZ"/>
    <property type="match status" value="1"/>
</dbReference>
<dbReference type="PANTHER" id="PTHR34476">
    <property type="entry name" value="DNA-DIRECTED RNA POLYMERASE SUBUNIT OMEGA"/>
    <property type="match status" value="1"/>
</dbReference>
<dbReference type="PANTHER" id="PTHR34476:SF1">
    <property type="entry name" value="DNA-DIRECTED RNA POLYMERASE SUBUNIT OMEGA"/>
    <property type="match status" value="1"/>
</dbReference>
<dbReference type="Pfam" id="PF01192">
    <property type="entry name" value="RNA_pol_Rpb6"/>
    <property type="match status" value="1"/>
</dbReference>
<dbReference type="SMART" id="SM01409">
    <property type="entry name" value="RNA_pol_Rpb6"/>
    <property type="match status" value="1"/>
</dbReference>
<dbReference type="SUPFAM" id="SSF63562">
    <property type="entry name" value="RPB6/omega subunit-like"/>
    <property type="match status" value="1"/>
</dbReference>
<reference key="1">
    <citation type="journal article" date="2001" name="Lancet">
        <title>Whole genome sequencing of meticillin-resistant Staphylococcus aureus.</title>
        <authorList>
            <person name="Kuroda M."/>
            <person name="Ohta T."/>
            <person name="Uchiyama I."/>
            <person name="Baba T."/>
            <person name="Yuzawa H."/>
            <person name="Kobayashi I."/>
            <person name="Cui L."/>
            <person name="Oguchi A."/>
            <person name="Aoki K."/>
            <person name="Nagai Y."/>
            <person name="Lian J.-Q."/>
            <person name="Ito T."/>
            <person name="Kanamori M."/>
            <person name="Matsumaru H."/>
            <person name="Maruyama A."/>
            <person name="Murakami H."/>
            <person name="Hosoyama A."/>
            <person name="Mizutani-Ui Y."/>
            <person name="Takahashi N.K."/>
            <person name="Sawano T."/>
            <person name="Inoue R."/>
            <person name="Kaito C."/>
            <person name="Sekimizu K."/>
            <person name="Hirakawa H."/>
            <person name="Kuhara S."/>
            <person name="Goto S."/>
            <person name="Yabuzaki J."/>
            <person name="Kanehisa M."/>
            <person name="Yamashita A."/>
            <person name="Oshima K."/>
            <person name="Furuya K."/>
            <person name="Yoshino C."/>
            <person name="Shiba T."/>
            <person name="Hattori M."/>
            <person name="Ogasawara N."/>
            <person name="Hayashi H."/>
            <person name="Hiramatsu K."/>
        </authorList>
    </citation>
    <scope>NUCLEOTIDE SEQUENCE [LARGE SCALE GENOMIC DNA]</scope>
    <source>
        <strain>N315</strain>
    </source>
</reference>
<reference key="2">
    <citation type="submission" date="2007-10" db="UniProtKB">
        <title>Shotgun proteomic analysis of total and membrane protein extracts of S. aureus strain N315.</title>
        <authorList>
            <person name="Vaezzadeh A.R."/>
            <person name="Deshusses J."/>
            <person name="Lescuyer P."/>
            <person name="Hochstrasser D.F."/>
        </authorList>
    </citation>
    <scope>IDENTIFICATION BY MASS SPECTROMETRY [LARGE SCALE ANALYSIS]</scope>
    <source>
        <strain>N315</strain>
    </source>
</reference>
<feature type="chain" id="PRO_0000128979" description="DNA-directed RNA polymerase subunit omega">
    <location>
        <begin position="1"/>
        <end position="72"/>
    </location>
</feature>
<organism>
    <name type="scientific">Staphylococcus aureus (strain N315)</name>
    <dbReference type="NCBI Taxonomy" id="158879"/>
    <lineage>
        <taxon>Bacteria</taxon>
        <taxon>Bacillati</taxon>
        <taxon>Bacillota</taxon>
        <taxon>Bacilli</taxon>
        <taxon>Bacillales</taxon>
        <taxon>Staphylococcaceae</taxon>
        <taxon>Staphylococcus</taxon>
    </lineage>
</organism>
<gene>
    <name evidence="1" type="primary">rpoZ</name>
    <name type="ordered locus">SA1053</name>
</gene>
<protein>
    <recommendedName>
        <fullName evidence="1">DNA-directed RNA polymerase subunit omega</fullName>
        <shortName evidence="1">RNAP omega subunit</shortName>
        <ecNumber evidence="1">2.7.7.6</ecNumber>
    </recommendedName>
    <alternativeName>
        <fullName evidence="1">RNA polymerase omega subunit</fullName>
    </alternativeName>
    <alternativeName>
        <fullName evidence="1">Transcriptase subunit omega</fullName>
    </alternativeName>
</protein>
<proteinExistence type="evidence at protein level"/>